<evidence type="ECO:0000255" key="1"/>
<evidence type="ECO:0000305" key="2"/>
<proteinExistence type="inferred from homology"/>
<protein>
    <recommendedName>
        <fullName>Uncharacterized protein CPn_0129/CPn_0130/CP_0642/CPj0130/CpB0131</fullName>
    </recommendedName>
</protein>
<feature type="chain" id="PRO_0000218364" description="Uncharacterized protein CPn_0129/CPn_0130/CP_0642/CPj0130/CpB0131">
    <location>
        <begin position="1"/>
        <end position="394"/>
    </location>
</feature>
<feature type="transmembrane region" description="Helical" evidence="1">
    <location>
        <begin position="31"/>
        <end position="51"/>
    </location>
</feature>
<feature type="transmembrane region" description="Helical" evidence="1">
    <location>
        <begin position="57"/>
        <end position="77"/>
    </location>
</feature>
<organism>
    <name type="scientific">Chlamydia pneumoniae</name>
    <name type="common">Chlamydophila pneumoniae</name>
    <dbReference type="NCBI Taxonomy" id="83558"/>
    <lineage>
        <taxon>Bacteria</taxon>
        <taxon>Pseudomonadati</taxon>
        <taxon>Chlamydiota</taxon>
        <taxon>Chlamydiia</taxon>
        <taxon>Chlamydiales</taxon>
        <taxon>Chlamydiaceae</taxon>
        <taxon>Chlamydia/Chlamydophila group</taxon>
        <taxon>Chlamydia</taxon>
    </lineage>
</organism>
<sequence>MVKCSSIIHENKKPAQLLPESKFAAITKLSLAILSLFLGIAACILIALSGLLPNTLLIIALSLISIIVLSTGISLLIGTQCSKSVQKDEQKPKSIFPKETPSLDPWLLNPLKNKIQSSETLLLDPTSINLKNELFFPSFEEWKKIFLKDPDFLIKSALANWKILEQDEQYILSHIHMDPRIFVTSEPLQKTYQKLQEKHVNNLGIASQVSLTDLQNKTQYENNLIETTTNEITYYFPVVHNPDILRSEWDPISNQLYLIFKKFFIHYHNLFSTALERNQILLIDSLNTGSSNPIARQMELLAFLCVFEQLDYNEDEYTIEPRDYFNRFVYKNSQTAPQIQSFGLLHGYEEMSYASNNIRNVLTHSIVLCSPILYQLITEFDTTKIHADDFDCLI</sequence>
<comment type="subcellular location">
    <subcellularLocation>
        <location evidence="2">Cell membrane</location>
        <topology evidence="2">Multi-pass membrane protein</topology>
    </subcellularLocation>
</comment>
<comment type="similarity">
    <text evidence="2">Belongs to the chlamydial CPn_0129/CT_036/TC_0306 family.</text>
</comment>
<comment type="sequence caution" evidence="2">
    <conflict type="erroneous initiation">
        <sequence resource="EMBL-CDS" id="AAD18282"/>
    </conflict>
</comment>
<comment type="sequence caution" evidence="2">
    <conflict type="erroneous termination">
        <sequence resource="EMBL-CDS" id="AAD18282"/>
    </conflict>
    <text>Truncated C-terminus.</text>
</comment>
<comment type="sequence caution" evidence="2">
    <conflict type="erroneous termination">
        <sequence resource="EMBL-CDS" id="AAD18283"/>
    </conflict>
    <text>Truncated C-terminus.</text>
</comment>
<name>Y129_CHLPN</name>
<gene>
    <name type="ordered locus">CPn_0129/CPn_0130</name>
    <name type="ordered locus">CP_0642</name>
    <name type="ordered locus">CPj0130</name>
    <name type="ordered locus">CpB0131</name>
</gene>
<dbReference type="EMBL" id="AE001363">
    <property type="protein sequence ID" value="AAD18283.1"/>
    <property type="status" value="ALT_SEQ"/>
    <property type="molecule type" value="Genomic_DNA"/>
</dbReference>
<dbReference type="EMBL" id="AE001363">
    <property type="protein sequence ID" value="AAD18282.1"/>
    <property type="status" value="ALT_INIT"/>
    <property type="molecule type" value="Genomic_DNA"/>
</dbReference>
<dbReference type="EMBL" id="AE002161">
    <property type="protein sequence ID" value="AAF38457.1"/>
    <property type="molecule type" value="Genomic_DNA"/>
</dbReference>
<dbReference type="EMBL" id="BA000008">
    <property type="protein sequence ID" value="BAA98340.1"/>
    <property type="molecule type" value="Genomic_DNA"/>
</dbReference>
<dbReference type="EMBL" id="AE009440">
    <property type="protein sequence ID" value="AAP98064.1"/>
    <property type="molecule type" value="Genomic_DNA"/>
</dbReference>
<dbReference type="PIR" id="B72116">
    <property type="entry name" value="B72116"/>
</dbReference>
<dbReference type="PIR" id="B81554">
    <property type="entry name" value="B81554"/>
</dbReference>
<dbReference type="PIR" id="B86507">
    <property type="entry name" value="B86507"/>
</dbReference>
<dbReference type="PIR" id="C72116">
    <property type="entry name" value="C72116"/>
</dbReference>
<dbReference type="RefSeq" id="WP_010892130.1">
    <property type="nucleotide sequence ID" value="NZ_LN847257.1"/>
</dbReference>
<dbReference type="GeneID" id="45050174"/>
<dbReference type="KEGG" id="cpa:CP_0642"/>
<dbReference type="KEGG" id="cpj:CPj0130"/>
<dbReference type="KEGG" id="cpn:CPn_0129"/>
<dbReference type="KEGG" id="cpn:CPn_0130"/>
<dbReference type="KEGG" id="cpt:CpB0131"/>
<dbReference type="HOGENOM" id="CLU_1265072_0_0_0"/>
<dbReference type="OrthoDB" id="19198at2"/>
<dbReference type="Proteomes" id="UP000000583">
    <property type="component" value="Chromosome"/>
</dbReference>
<dbReference type="Proteomes" id="UP000000801">
    <property type="component" value="Chromosome"/>
</dbReference>
<dbReference type="GO" id="GO:0005886">
    <property type="term" value="C:plasma membrane"/>
    <property type="evidence" value="ECO:0007669"/>
    <property type="project" value="UniProtKB-SubCell"/>
</dbReference>
<keyword id="KW-1003">Cell membrane</keyword>
<keyword id="KW-0472">Membrane</keyword>
<keyword id="KW-0812">Transmembrane</keyword>
<keyword id="KW-1133">Transmembrane helix</keyword>
<reference key="1">
    <citation type="journal article" date="1999" name="Nat. Genet.">
        <title>Comparative genomes of Chlamydia pneumoniae and C. trachomatis.</title>
        <authorList>
            <person name="Kalman S."/>
            <person name="Mitchell W.P."/>
            <person name="Marathe R."/>
            <person name="Lammel C.J."/>
            <person name="Fan J."/>
            <person name="Hyman R.W."/>
            <person name="Olinger L."/>
            <person name="Grimwood J."/>
            <person name="Davis R.W."/>
            <person name="Stephens R.S."/>
        </authorList>
    </citation>
    <scope>NUCLEOTIDE SEQUENCE [LARGE SCALE GENOMIC DNA]</scope>
    <source>
        <strain>CWL029</strain>
    </source>
</reference>
<reference key="2">
    <citation type="journal article" date="2000" name="Nucleic Acids Res.">
        <title>Genome sequences of Chlamydia trachomatis MoPn and Chlamydia pneumoniae AR39.</title>
        <authorList>
            <person name="Read T.D."/>
            <person name="Brunham R.C."/>
            <person name="Shen C."/>
            <person name="Gill S.R."/>
            <person name="Heidelberg J.F."/>
            <person name="White O."/>
            <person name="Hickey E.K."/>
            <person name="Peterson J.D."/>
            <person name="Utterback T.R."/>
            <person name="Berry K.J."/>
            <person name="Bass S."/>
            <person name="Linher K.D."/>
            <person name="Weidman J.F."/>
            <person name="Khouri H.M."/>
            <person name="Craven B."/>
            <person name="Bowman C."/>
            <person name="Dodson R.J."/>
            <person name="Gwinn M.L."/>
            <person name="Nelson W.C."/>
            <person name="DeBoy R.T."/>
            <person name="Kolonay J.F."/>
            <person name="McClarty G."/>
            <person name="Salzberg S.L."/>
            <person name="Eisen J.A."/>
            <person name="Fraser C.M."/>
        </authorList>
    </citation>
    <scope>NUCLEOTIDE SEQUENCE [LARGE SCALE GENOMIC DNA]</scope>
    <source>
        <strain>AR39</strain>
    </source>
</reference>
<reference key="3">
    <citation type="journal article" date="2000" name="Nucleic Acids Res.">
        <title>Comparison of whole genome sequences of Chlamydia pneumoniae J138 from Japan and CWL029 from USA.</title>
        <authorList>
            <person name="Shirai M."/>
            <person name="Hirakawa H."/>
            <person name="Kimoto M."/>
            <person name="Tabuchi M."/>
            <person name="Kishi F."/>
            <person name="Ouchi K."/>
            <person name="Shiba T."/>
            <person name="Ishii K."/>
            <person name="Hattori M."/>
            <person name="Kuhara S."/>
            <person name="Nakazawa T."/>
        </authorList>
    </citation>
    <scope>NUCLEOTIDE SEQUENCE [LARGE SCALE GENOMIC DNA]</scope>
    <source>
        <strain>J138</strain>
    </source>
</reference>
<reference key="4">
    <citation type="submission" date="2002-05" db="EMBL/GenBank/DDBJ databases">
        <title>The genome sequence of Chlamydia pneumoniae TW183 and comparison with other Chlamydia strains based on whole genome sequence analysis.</title>
        <authorList>
            <person name="Geng M.M."/>
            <person name="Schuhmacher A."/>
            <person name="Muehldorfer I."/>
            <person name="Bensch K.W."/>
            <person name="Schaefer K.P."/>
            <person name="Schneider S."/>
            <person name="Pohl T."/>
            <person name="Essig A."/>
            <person name="Marre R."/>
            <person name="Melchers K."/>
        </authorList>
    </citation>
    <scope>NUCLEOTIDE SEQUENCE [LARGE SCALE GENOMIC DNA]</scope>
    <source>
        <strain>TW-183</strain>
    </source>
</reference>
<accession>Q9JRX2</accession>
<accession>Q9Z951</accession>
<accession>Q9Z952</accession>